<feature type="chain" id="PRO_0000250856" description="NAD(P)H-quinone oxidoreductase subunit I, chloroplastic">
    <location>
        <begin position="1"/>
        <end position="166"/>
    </location>
</feature>
<feature type="domain" description="4Fe-4S ferredoxin-type 1" evidence="1">
    <location>
        <begin position="55"/>
        <end position="84"/>
    </location>
</feature>
<feature type="domain" description="4Fe-4S ferredoxin-type 2" evidence="1">
    <location>
        <begin position="95"/>
        <end position="124"/>
    </location>
</feature>
<feature type="binding site" evidence="1">
    <location>
        <position position="64"/>
    </location>
    <ligand>
        <name>[4Fe-4S] cluster</name>
        <dbReference type="ChEBI" id="CHEBI:49883"/>
        <label>1</label>
    </ligand>
</feature>
<feature type="binding site" evidence="1">
    <location>
        <position position="67"/>
    </location>
    <ligand>
        <name>[4Fe-4S] cluster</name>
        <dbReference type="ChEBI" id="CHEBI:49883"/>
        <label>1</label>
    </ligand>
</feature>
<feature type="binding site" evidence="1">
    <location>
        <position position="70"/>
    </location>
    <ligand>
        <name>[4Fe-4S] cluster</name>
        <dbReference type="ChEBI" id="CHEBI:49883"/>
        <label>1</label>
    </ligand>
</feature>
<feature type="binding site" evidence="1">
    <location>
        <position position="74"/>
    </location>
    <ligand>
        <name>[4Fe-4S] cluster</name>
        <dbReference type="ChEBI" id="CHEBI:49883"/>
        <label>2</label>
    </ligand>
</feature>
<feature type="binding site" evidence="1">
    <location>
        <position position="104"/>
    </location>
    <ligand>
        <name>[4Fe-4S] cluster</name>
        <dbReference type="ChEBI" id="CHEBI:49883"/>
        <label>2</label>
    </ligand>
</feature>
<feature type="binding site" evidence="1">
    <location>
        <position position="107"/>
    </location>
    <ligand>
        <name>[4Fe-4S] cluster</name>
        <dbReference type="ChEBI" id="CHEBI:49883"/>
        <label>2</label>
    </ligand>
</feature>
<feature type="binding site" evidence="1">
    <location>
        <position position="110"/>
    </location>
    <ligand>
        <name>[4Fe-4S] cluster</name>
        <dbReference type="ChEBI" id="CHEBI:49883"/>
        <label>2</label>
    </ligand>
</feature>
<feature type="binding site" evidence="1">
    <location>
        <position position="114"/>
    </location>
    <ligand>
        <name>[4Fe-4S] cluster</name>
        <dbReference type="ChEBI" id="CHEBI:49883"/>
        <label>1</label>
    </ligand>
</feature>
<proteinExistence type="inferred from homology"/>
<protein>
    <recommendedName>
        <fullName evidence="1">NAD(P)H-quinone oxidoreductase subunit I, chloroplastic</fullName>
        <ecNumber evidence="1">7.1.1.-</ecNumber>
    </recommendedName>
    <alternativeName>
        <fullName evidence="1">NAD(P)H dehydrogenase subunit I</fullName>
        <shortName evidence="1">NDH subunit I</shortName>
    </alternativeName>
    <alternativeName>
        <fullName evidence="1">NADH-plastoquinone oxidoreductase subunit I</fullName>
    </alternativeName>
</protein>
<sequence>MFPMVTEFMNYGQQTVRAARYIGQGFMITLSHANRLPVTIQYPYEKLITSERFRGRIHFEFDKCIACEVCVRVCPIDLPVVDWKLETDIRKKRLLNYSIDFGICIFCGNCVEYCPTNCLSMTEEYELSTYDRHELNYNQIALGRLPMSIIDDYTIRTILNLPEIKT</sequence>
<geneLocation type="chloroplast"/>
<dbReference type="EC" id="7.1.1.-" evidence="1"/>
<dbReference type="EMBL" id="AF383858">
    <property type="protein sequence ID" value="AAN61799.1"/>
    <property type="molecule type" value="Genomic_DNA"/>
</dbReference>
<dbReference type="RefSeq" id="YP_009710999.1">
    <property type="nucleotide sequence ID" value="NC_045211.1"/>
</dbReference>
<dbReference type="SMR" id="Q8HVK5"/>
<dbReference type="GeneID" id="42438504"/>
<dbReference type="GO" id="GO:0009535">
    <property type="term" value="C:chloroplast thylakoid membrane"/>
    <property type="evidence" value="ECO:0007669"/>
    <property type="project" value="UniProtKB-SubCell"/>
</dbReference>
<dbReference type="GO" id="GO:0051539">
    <property type="term" value="F:4 iron, 4 sulfur cluster binding"/>
    <property type="evidence" value="ECO:0007669"/>
    <property type="project" value="UniProtKB-KW"/>
</dbReference>
<dbReference type="GO" id="GO:0005506">
    <property type="term" value="F:iron ion binding"/>
    <property type="evidence" value="ECO:0007669"/>
    <property type="project" value="UniProtKB-UniRule"/>
</dbReference>
<dbReference type="GO" id="GO:0008137">
    <property type="term" value="F:NADH dehydrogenase (ubiquinone) activity"/>
    <property type="evidence" value="ECO:0007669"/>
    <property type="project" value="InterPro"/>
</dbReference>
<dbReference type="GO" id="GO:0048038">
    <property type="term" value="F:quinone binding"/>
    <property type="evidence" value="ECO:0007669"/>
    <property type="project" value="UniProtKB-KW"/>
</dbReference>
<dbReference type="GO" id="GO:0019684">
    <property type="term" value="P:photosynthesis, light reaction"/>
    <property type="evidence" value="ECO:0007669"/>
    <property type="project" value="UniProtKB-UniRule"/>
</dbReference>
<dbReference type="FunFam" id="3.30.70.3270:FF:000006">
    <property type="entry name" value="NAD(P)H-quinone oxidoreductase subunit I, chloroplastic"/>
    <property type="match status" value="1"/>
</dbReference>
<dbReference type="Gene3D" id="3.30.70.3270">
    <property type="match status" value="1"/>
</dbReference>
<dbReference type="HAMAP" id="MF_01351">
    <property type="entry name" value="NDH1_NuoI"/>
    <property type="match status" value="1"/>
</dbReference>
<dbReference type="InterPro" id="IPR017896">
    <property type="entry name" value="4Fe4S_Fe-S-bd"/>
</dbReference>
<dbReference type="InterPro" id="IPR017900">
    <property type="entry name" value="4Fe4S_Fe_S_CS"/>
</dbReference>
<dbReference type="InterPro" id="IPR010226">
    <property type="entry name" value="NADH_quinone_OxRdtase_chainI"/>
</dbReference>
<dbReference type="InterPro" id="IPR004497">
    <property type="entry name" value="NDHI"/>
</dbReference>
<dbReference type="NCBIfam" id="TIGR00403">
    <property type="entry name" value="ndhI"/>
    <property type="match status" value="1"/>
</dbReference>
<dbReference type="NCBIfam" id="TIGR01971">
    <property type="entry name" value="NuoI"/>
    <property type="match status" value="1"/>
</dbReference>
<dbReference type="NCBIfam" id="NF004537">
    <property type="entry name" value="PRK05888.1-3"/>
    <property type="match status" value="1"/>
</dbReference>
<dbReference type="PANTHER" id="PTHR47275">
    <property type="entry name" value="NAD(P)H-QUINONE OXIDOREDUCTASE SUBUNIT I, CHLOROPLASTIC"/>
    <property type="match status" value="1"/>
</dbReference>
<dbReference type="PANTHER" id="PTHR47275:SF1">
    <property type="entry name" value="NAD(P)H-QUINONE OXIDOREDUCTASE SUBUNIT I, CHLOROPLASTIC"/>
    <property type="match status" value="1"/>
</dbReference>
<dbReference type="Pfam" id="PF00037">
    <property type="entry name" value="Fer4"/>
    <property type="match status" value="2"/>
</dbReference>
<dbReference type="SUPFAM" id="SSF54862">
    <property type="entry name" value="4Fe-4S ferredoxins"/>
    <property type="match status" value="1"/>
</dbReference>
<dbReference type="PROSITE" id="PS00198">
    <property type="entry name" value="4FE4S_FER_1"/>
    <property type="match status" value="2"/>
</dbReference>
<dbReference type="PROSITE" id="PS51379">
    <property type="entry name" value="4FE4S_FER_2"/>
    <property type="match status" value="2"/>
</dbReference>
<evidence type="ECO:0000255" key="1">
    <source>
        <dbReference type="HAMAP-Rule" id="MF_01351"/>
    </source>
</evidence>
<organism>
    <name type="scientific">Tagetes erecta</name>
    <name type="common">African marigold</name>
    <dbReference type="NCBI Taxonomy" id="13708"/>
    <lineage>
        <taxon>Eukaryota</taxon>
        <taxon>Viridiplantae</taxon>
        <taxon>Streptophyta</taxon>
        <taxon>Embryophyta</taxon>
        <taxon>Tracheophyta</taxon>
        <taxon>Spermatophyta</taxon>
        <taxon>Magnoliopsida</taxon>
        <taxon>eudicotyledons</taxon>
        <taxon>Gunneridae</taxon>
        <taxon>Pentapetalae</taxon>
        <taxon>asterids</taxon>
        <taxon>campanulids</taxon>
        <taxon>Asterales</taxon>
        <taxon>Asteraceae</taxon>
        <taxon>Asteroideae</taxon>
        <taxon>Heliantheae alliance</taxon>
        <taxon>Tageteae</taxon>
        <taxon>Tagetes</taxon>
    </lineage>
</organism>
<comment type="function">
    <text evidence="1">NDH shuttles electrons from NAD(P)H:plastoquinone, via FMN and iron-sulfur (Fe-S) centers, to quinones in the photosynthetic chain and possibly in a chloroplast respiratory chain. The immediate electron acceptor for the enzyme in this species is believed to be plastoquinone. Couples the redox reaction to proton translocation, and thus conserves the redox energy in a proton gradient.</text>
</comment>
<comment type="catalytic activity">
    <reaction evidence="1">
        <text>a plastoquinone + NADH + (n+1) H(+)(in) = a plastoquinol + NAD(+) + n H(+)(out)</text>
        <dbReference type="Rhea" id="RHEA:42608"/>
        <dbReference type="Rhea" id="RHEA-COMP:9561"/>
        <dbReference type="Rhea" id="RHEA-COMP:9562"/>
        <dbReference type="ChEBI" id="CHEBI:15378"/>
        <dbReference type="ChEBI" id="CHEBI:17757"/>
        <dbReference type="ChEBI" id="CHEBI:57540"/>
        <dbReference type="ChEBI" id="CHEBI:57945"/>
        <dbReference type="ChEBI" id="CHEBI:62192"/>
    </reaction>
</comment>
<comment type="catalytic activity">
    <reaction evidence="1">
        <text>a plastoquinone + NADPH + (n+1) H(+)(in) = a plastoquinol + NADP(+) + n H(+)(out)</text>
        <dbReference type="Rhea" id="RHEA:42612"/>
        <dbReference type="Rhea" id="RHEA-COMP:9561"/>
        <dbReference type="Rhea" id="RHEA-COMP:9562"/>
        <dbReference type="ChEBI" id="CHEBI:15378"/>
        <dbReference type="ChEBI" id="CHEBI:17757"/>
        <dbReference type="ChEBI" id="CHEBI:57783"/>
        <dbReference type="ChEBI" id="CHEBI:58349"/>
        <dbReference type="ChEBI" id="CHEBI:62192"/>
    </reaction>
</comment>
<comment type="cofactor">
    <cofactor evidence="1">
        <name>[4Fe-4S] cluster</name>
        <dbReference type="ChEBI" id="CHEBI:49883"/>
    </cofactor>
    <text evidence="1">Binds 2 [4Fe-4S] clusters per subunit.</text>
</comment>
<comment type="subunit">
    <text evidence="1">NDH is composed of at least 16 different subunits, 5 of which are encoded in the nucleus.</text>
</comment>
<comment type="subcellular location">
    <subcellularLocation>
        <location evidence="1">Plastid</location>
        <location evidence="1">Chloroplast thylakoid membrane</location>
        <topology evidence="1">Peripheral membrane protein</topology>
    </subcellularLocation>
</comment>
<comment type="similarity">
    <text evidence="1">Belongs to the complex I 23 kDa subunit family.</text>
</comment>
<keyword id="KW-0004">4Fe-4S</keyword>
<keyword id="KW-0150">Chloroplast</keyword>
<keyword id="KW-0408">Iron</keyword>
<keyword id="KW-0411">Iron-sulfur</keyword>
<keyword id="KW-0472">Membrane</keyword>
<keyword id="KW-0479">Metal-binding</keyword>
<keyword id="KW-0520">NAD</keyword>
<keyword id="KW-0521">NADP</keyword>
<keyword id="KW-0934">Plastid</keyword>
<keyword id="KW-0618">Plastoquinone</keyword>
<keyword id="KW-0874">Quinone</keyword>
<keyword id="KW-0677">Repeat</keyword>
<keyword id="KW-0793">Thylakoid</keyword>
<keyword id="KW-1278">Translocase</keyword>
<reference key="1">
    <citation type="submission" date="2003-01" db="EMBL/GenBank/DDBJ databases">
        <title>Chloroplast DNA phylogeny of tribe Heliantheae (Asteraceae).</title>
        <authorList>
            <person name="Panero J.L."/>
            <person name="Baldwin B.G."/>
            <person name="Schilling E.E."/>
            <person name="Clevinger J.A."/>
        </authorList>
    </citation>
    <scope>NUCLEOTIDE SEQUENCE [GENOMIC DNA]</scope>
</reference>
<name>NDHI_TARER</name>
<accession>Q8HVK5</accession>
<gene>
    <name evidence="1" type="primary">ndhI</name>
</gene>